<proteinExistence type="inferred from homology"/>
<gene>
    <name evidence="1" type="primary">ureB</name>
    <name type="ordered locus">RHOS4_19150</name>
    <name type="ORF">RSP_0308</name>
</gene>
<comment type="catalytic activity">
    <reaction evidence="1">
        <text>urea + 2 H2O + H(+) = hydrogencarbonate + 2 NH4(+)</text>
        <dbReference type="Rhea" id="RHEA:20557"/>
        <dbReference type="ChEBI" id="CHEBI:15377"/>
        <dbReference type="ChEBI" id="CHEBI:15378"/>
        <dbReference type="ChEBI" id="CHEBI:16199"/>
        <dbReference type="ChEBI" id="CHEBI:17544"/>
        <dbReference type="ChEBI" id="CHEBI:28938"/>
        <dbReference type="EC" id="3.5.1.5"/>
    </reaction>
</comment>
<comment type="pathway">
    <text evidence="1">Nitrogen metabolism; urea degradation; CO(2) and NH(3) from urea (urease route): step 1/1.</text>
</comment>
<comment type="subunit">
    <text evidence="1">Heterotrimer of UreA (gamma), UreB (beta) and UreC (alpha) subunits. Three heterotrimers associate to form the active enzyme.</text>
</comment>
<comment type="subcellular location">
    <subcellularLocation>
        <location evidence="1">Cytoplasm</location>
    </subcellularLocation>
</comment>
<comment type="similarity">
    <text evidence="1">Belongs to the urease beta subunit family.</text>
</comment>
<comment type="sequence caution" evidence="2">
    <conflict type="frameshift">
        <sequence resource="EMBL-CDS" id="AAF24253"/>
    </conflict>
</comment>
<dbReference type="EC" id="3.5.1.5" evidence="1"/>
<dbReference type="EMBL" id="AF195122">
    <property type="protein sequence ID" value="AAF24253.1"/>
    <property type="status" value="ALT_FRAME"/>
    <property type="molecule type" value="Genomic_DNA"/>
</dbReference>
<dbReference type="EMBL" id="CP000143">
    <property type="protein sequence ID" value="ABA79483.1"/>
    <property type="molecule type" value="Genomic_DNA"/>
</dbReference>
<dbReference type="PIR" id="T50709">
    <property type="entry name" value="T50709"/>
</dbReference>
<dbReference type="RefSeq" id="WP_002720474.1">
    <property type="nucleotide sequence ID" value="NZ_CP030271.1"/>
</dbReference>
<dbReference type="RefSeq" id="YP_353384.1">
    <property type="nucleotide sequence ID" value="NC_007493.2"/>
</dbReference>
<dbReference type="SMR" id="Q3J151"/>
<dbReference type="STRING" id="272943.RSP_0308"/>
<dbReference type="EnsemblBacteria" id="ABA79483">
    <property type="protein sequence ID" value="ABA79483"/>
    <property type="gene ID" value="RSP_0308"/>
</dbReference>
<dbReference type="GeneID" id="3719164"/>
<dbReference type="KEGG" id="rsp:RSP_0308"/>
<dbReference type="PATRIC" id="fig|272943.9.peg.2255"/>
<dbReference type="eggNOG" id="COG0832">
    <property type="taxonomic scope" value="Bacteria"/>
</dbReference>
<dbReference type="OrthoDB" id="9797217at2"/>
<dbReference type="PhylomeDB" id="Q3J151"/>
<dbReference type="UniPathway" id="UPA00258">
    <property type="reaction ID" value="UER00370"/>
</dbReference>
<dbReference type="Proteomes" id="UP000002703">
    <property type="component" value="Chromosome 1"/>
</dbReference>
<dbReference type="GO" id="GO:0035550">
    <property type="term" value="C:urease complex"/>
    <property type="evidence" value="ECO:0007669"/>
    <property type="project" value="InterPro"/>
</dbReference>
<dbReference type="GO" id="GO:0009039">
    <property type="term" value="F:urease activity"/>
    <property type="evidence" value="ECO:0007669"/>
    <property type="project" value="UniProtKB-UniRule"/>
</dbReference>
<dbReference type="GO" id="GO:0043419">
    <property type="term" value="P:urea catabolic process"/>
    <property type="evidence" value="ECO:0007669"/>
    <property type="project" value="UniProtKB-UniRule"/>
</dbReference>
<dbReference type="CDD" id="cd00407">
    <property type="entry name" value="Urease_beta"/>
    <property type="match status" value="1"/>
</dbReference>
<dbReference type="FunFam" id="2.10.150.10:FF:000001">
    <property type="entry name" value="Urease subunit beta"/>
    <property type="match status" value="1"/>
</dbReference>
<dbReference type="Gene3D" id="2.10.150.10">
    <property type="entry name" value="Urease, beta subunit"/>
    <property type="match status" value="1"/>
</dbReference>
<dbReference type="HAMAP" id="MF_01954">
    <property type="entry name" value="Urease_beta"/>
    <property type="match status" value="1"/>
</dbReference>
<dbReference type="InterPro" id="IPR002019">
    <property type="entry name" value="Urease_beta-like"/>
</dbReference>
<dbReference type="InterPro" id="IPR036461">
    <property type="entry name" value="Urease_betasu_sf"/>
</dbReference>
<dbReference type="InterPro" id="IPR050069">
    <property type="entry name" value="Urease_subunit"/>
</dbReference>
<dbReference type="NCBIfam" id="NF009682">
    <property type="entry name" value="PRK13203.1"/>
    <property type="match status" value="1"/>
</dbReference>
<dbReference type="NCBIfam" id="TIGR00192">
    <property type="entry name" value="urease_beta"/>
    <property type="match status" value="1"/>
</dbReference>
<dbReference type="PANTHER" id="PTHR33569">
    <property type="entry name" value="UREASE"/>
    <property type="match status" value="1"/>
</dbReference>
<dbReference type="PANTHER" id="PTHR33569:SF1">
    <property type="entry name" value="UREASE"/>
    <property type="match status" value="1"/>
</dbReference>
<dbReference type="Pfam" id="PF00699">
    <property type="entry name" value="Urease_beta"/>
    <property type="match status" value="1"/>
</dbReference>
<dbReference type="SUPFAM" id="SSF51278">
    <property type="entry name" value="Urease, beta-subunit"/>
    <property type="match status" value="1"/>
</dbReference>
<organism>
    <name type="scientific">Cereibacter sphaeroides (strain ATCC 17023 / DSM 158 / JCM 6121 / CCUG 31486 / LMG 2827 / NBRC 12203 / NCIMB 8253 / ATH 2.4.1.)</name>
    <name type="common">Rhodobacter sphaeroides</name>
    <dbReference type="NCBI Taxonomy" id="272943"/>
    <lineage>
        <taxon>Bacteria</taxon>
        <taxon>Pseudomonadati</taxon>
        <taxon>Pseudomonadota</taxon>
        <taxon>Alphaproteobacteria</taxon>
        <taxon>Rhodobacterales</taxon>
        <taxon>Paracoccaceae</taxon>
        <taxon>Cereibacter</taxon>
    </lineage>
</organism>
<name>URE2_CERS4</name>
<feature type="chain" id="PRO_0000234270" description="Urease subunit beta">
    <location>
        <begin position="1"/>
        <end position="101"/>
    </location>
</feature>
<keyword id="KW-0963">Cytoplasm</keyword>
<keyword id="KW-0378">Hydrolase</keyword>
<keyword id="KW-1185">Reference proteome</keyword>
<accession>Q3J151</accession>
<accession>Q9RFF4</accession>
<protein>
    <recommendedName>
        <fullName evidence="1">Urease subunit beta</fullName>
        <ecNumber evidence="1">3.5.1.5</ecNumber>
    </recommendedName>
    <alternativeName>
        <fullName evidence="1">Urea amidohydrolase subunit beta</fullName>
    </alternativeName>
</protein>
<evidence type="ECO:0000255" key="1">
    <source>
        <dbReference type="HAMAP-Rule" id="MF_01954"/>
    </source>
</evidence>
<evidence type="ECO:0000305" key="2"/>
<sequence>MIPGELFPAEGEILLNAERAQITLVVSNAGDRPVQVGSHYHFAETNPALEFDREAARGMRLDIPAGTAVRFEPGQTREVRLVSYAGSREVYGFNGRIMGKL</sequence>
<reference key="1">
    <citation type="journal article" date="2000" name="Nucleic Acids Res.">
        <title>DNA sequence analysis of the photosynthesis region of Rhodobacter sphaeroides 2.4.1.</title>
        <authorList>
            <person name="Choudhary M."/>
            <person name="Kaplan S."/>
        </authorList>
    </citation>
    <scope>NUCLEOTIDE SEQUENCE [GENOMIC DNA]</scope>
</reference>
<reference key="2">
    <citation type="submission" date="2005-09" db="EMBL/GenBank/DDBJ databases">
        <title>Complete sequence of chromosome 1 of Rhodobacter sphaeroides 2.4.1.</title>
        <authorList>
            <person name="Copeland A."/>
            <person name="Lucas S."/>
            <person name="Lapidus A."/>
            <person name="Barry K."/>
            <person name="Detter J.C."/>
            <person name="Glavina T."/>
            <person name="Hammon N."/>
            <person name="Israni S."/>
            <person name="Pitluck S."/>
            <person name="Richardson P."/>
            <person name="Mackenzie C."/>
            <person name="Choudhary M."/>
            <person name="Larimer F."/>
            <person name="Hauser L.J."/>
            <person name="Land M."/>
            <person name="Donohue T.J."/>
            <person name="Kaplan S."/>
        </authorList>
    </citation>
    <scope>NUCLEOTIDE SEQUENCE [LARGE SCALE GENOMIC DNA]</scope>
    <source>
        <strain>ATCC 17023 / DSM 158 / JCM 6121 / CCUG 31486 / LMG 2827 / NBRC 12203 / NCIMB 8253 / ATH 2.4.1.</strain>
    </source>
</reference>